<dbReference type="EC" id="5.3.1.15" evidence="1"/>
<dbReference type="EC" id="5.3.1.7" evidence="1"/>
<dbReference type="EMBL" id="AE005174">
    <property type="protein sequence ID" value="AAG59285.1"/>
    <property type="molecule type" value="Genomic_DNA"/>
</dbReference>
<dbReference type="PIR" id="A86103">
    <property type="entry name" value="A86103"/>
</dbReference>
<dbReference type="PIR" id="F91262">
    <property type="entry name" value="F91262"/>
</dbReference>
<dbReference type="RefSeq" id="WP_000830337.1">
    <property type="nucleotide sequence ID" value="NZ_VOAI01000008.1"/>
</dbReference>
<dbReference type="PDB" id="3KMH">
    <property type="method" value="X-ray"/>
    <property type="resolution" value="1.58 A"/>
    <property type="chains" value="A/B=1-227"/>
</dbReference>
<dbReference type="PDB" id="3MPB">
    <property type="method" value="X-ray"/>
    <property type="resolution" value="1.91 A"/>
    <property type="chains" value="A/B=1-227"/>
</dbReference>
<dbReference type="PDBsum" id="3KMH"/>
<dbReference type="PDBsum" id="3MPB"/>
<dbReference type="SMR" id="A0A6M7H989"/>
<dbReference type="KEGG" id="ece:Z5688"/>
<dbReference type="PATRIC" id="fig|386585.9.peg.5298"/>
<dbReference type="OMA" id="PYAEKIM"/>
<dbReference type="Proteomes" id="UP000002519">
    <property type="component" value="Chromosome"/>
</dbReference>
<dbReference type="GO" id="GO:0016853">
    <property type="term" value="F:isomerase activity"/>
    <property type="evidence" value="ECO:0007669"/>
    <property type="project" value="UniProtKB-KW"/>
</dbReference>
<dbReference type="GO" id="GO:0046872">
    <property type="term" value="F:metal ion binding"/>
    <property type="evidence" value="ECO:0007669"/>
    <property type="project" value="UniProtKB-KW"/>
</dbReference>
<dbReference type="CDD" id="cd20309">
    <property type="entry name" value="cupin_EcSI"/>
    <property type="match status" value="1"/>
</dbReference>
<dbReference type="Gene3D" id="2.60.120.10">
    <property type="entry name" value="Jelly Rolls"/>
    <property type="match status" value="1"/>
</dbReference>
<dbReference type="InterPro" id="IPR010864">
    <property type="entry name" value="D-lyxose_isomer"/>
</dbReference>
<dbReference type="InterPro" id="IPR047581">
    <property type="entry name" value="EcSI_cupin"/>
</dbReference>
<dbReference type="InterPro" id="IPR014710">
    <property type="entry name" value="RmlC-like_jellyroll"/>
</dbReference>
<dbReference type="InterPro" id="IPR011051">
    <property type="entry name" value="RmlC_Cupin_sf"/>
</dbReference>
<dbReference type="Pfam" id="PF07385">
    <property type="entry name" value="Lyx_isomer"/>
    <property type="match status" value="1"/>
</dbReference>
<dbReference type="SUPFAM" id="SSF51182">
    <property type="entry name" value="RmlC-like cupins"/>
    <property type="match status" value="1"/>
</dbReference>
<feature type="chain" id="PRO_0000455823" description="D-lyxose/D-mannose isomerase">
    <location>
        <begin position="1"/>
        <end position="227"/>
    </location>
</feature>
<feature type="binding site" evidence="1 5">
    <location>
        <position position="90"/>
    </location>
    <ligand>
        <name>D-fructose</name>
        <dbReference type="ChEBI" id="CHEBI:37721"/>
    </ligand>
</feature>
<feature type="binding site" evidence="1 5">
    <location>
        <begin position="103"/>
        <end position="110"/>
    </location>
    <ligand>
        <name>D-fructose</name>
        <dbReference type="ChEBI" id="CHEBI:37721"/>
    </ligand>
</feature>
<feature type="binding site" evidence="1 4 5">
    <location>
        <position position="103"/>
    </location>
    <ligand>
        <name>Mn(2+)</name>
        <dbReference type="ChEBI" id="CHEBI:29035"/>
    </ligand>
</feature>
<feature type="binding site" evidence="1 4 5">
    <location>
        <position position="105"/>
    </location>
    <ligand>
        <name>Mn(2+)</name>
        <dbReference type="ChEBI" id="CHEBI:29035"/>
    </ligand>
</feature>
<feature type="binding site" evidence="1 4 5">
    <location>
        <position position="110"/>
    </location>
    <ligand>
        <name>Mn(2+)</name>
        <dbReference type="ChEBI" id="CHEBI:29035"/>
    </ligand>
</feature>
<feature type="binding site" evidence="1 5">
    <location>
        <position position="171"/>
    </location>
    <ligand>
        <name>D-fructose</name>
        <dbReference type="ChEBI" id="CHEBI:37721"/>
    </ligand>
</feature>
<feature type="binding site" evidence="1 4 5">
    <location>
        <position position="171"/>
    </location>
    <ligand>
        <name>Mn(2+)</name>
        <dbReference type="ChEBI" id="CHEBI:29035"/>
    </ligand>
</feature>
<feature type="binding site" evidence="1 5">
    <location>
        <position position="186"/>
    </location>
    <ligand>
        <name>D-fructose</name>
        <dbReference type="ChEBI" id="CHEBI:37721"/>
    </ligand>
</feature>
<feature type="binding site" evidence="1 5">
    <location>
        <position position="193"/>
    </location>
    <ligand>
        <name>D-fructose</name>
        <dbReference type="ChEBI" id="CHEBI:37721"/>
    </ligand>
</feature>
<feature type="disulfide bond" description="Interchain" evidence="1 4 5">
    <location>
        <position position="86"/>
    </location>
</feature>
<feature type="mutagenesis site" description="Retains 0.7% of wild-type activity." evidence="1">
    <original>K</original>
    <variation>A</variation>
    <location>
        <position position="90"/>
    </location>
</feature>
<feature type="mutagenesis site" description="Loss of activity." evidence="1">
    <original>K</original>
    <variation>A</variation>
    <location>
        <position position="108"/>
    </location>
</feature>
<feature type="mutagenesis site" description="Retains 1.4% of wild-type activity." evidence="1">
    <original>E</original>
    <variation>A</variation>
    <location>
        <position position="110"/>
    </location>
</feature>
<feature type="mutagenesis site" description="Loss of activity." evidence="1">
    <original>E</original>
    <variation>A</variation>
    <location>
        <position position="186"/>
    </location>
</feature>
<feature type="mutagenesis site" description="Loss of activity." evidence="1">
    <original>D</original>
    <variation>A</variation>
    <location>
        <position position="193"/>
    </location>
</feature>
<feature type="mutagenesis site" description="Retains 9% of wild-type activity." evidence="1">
    <original>R</original>
    <variation>A</variation>
    <location>
        <position position="205"/>
    </location>
</feature>
<comment type="function">
    <text evidence="1">Sugar isomerase that catalyzes the reversible isomerization of D-lyxose to D-xylulose, and D-mannose to D-fructose (PubMed:20615418). Shows similar activity toward D-lyxose and D-mannose with a turnover and catalytic efficiency for D-lyxose as a substrate only 1.1- and 1.3-fold higher than those for D-mannose, respectively (PubMed:20615418). Shows weaker activity with L-gulose, D-talose, L-ribose and L-allose (PubMed:20615418). Overexpression enables cell growth on the rare pentose D-lyxose as the sole carbon source (PubMed:20615418).</text>
</comment>
<comment type="catalytic activity">
    <reaction evidence="1">
        <text>D-lyxose = D-xylulose</text>
        <dbReference type="Rhea" id="RHEA:14201"/>
        <dbReference type="ChEBI" id="CHEBI:16789"/>
        <dbReference type="ChEBI" id="CHEBI:17140"/>
        <dbReference type="EC" id="5.3.1.15"/>
    </reaction>
</comment>
<comment type="catalytic activity">
    <reaction evidence="1">
        <text>D-mannose = D-fructose</text>
        <dbReference type="Rhea" id="RHEA:22604"/>
        <dbReference type="ChEBI" id="CHEBI:4208"/>
        <dbReference type="ChEBI" id="CHEBI:37721"/>
        <dbReference type="EC" id="5.3.1.7"/>
    </reaction>
</comment>
<comment type="cofactor">
    <cofactor evidence="1">
        <name>Mn(2+)</name>
        <dbReference type="ChEBI" id="CHEBI:29035"/>
    </cofactor>
</comment>
<comment type="biophysicochemical properties">
    <kinetics>
        <KM evidence="1">16.1 mM for D-lyxose</KM>
        <KM evidence="1">19.8 mM for D-mannose</KM>
        <KM evidence="1">55.2 mM for L-gulose</KM>
        <Vmax evidence="1">14.1 umol/min/mg enzyme with D-lyxose as substrate</Vmax>
        <Vmax evidence="1">13.1 umol/min/mg enzyme with D-mannose as substrate</Vmax>
        <Vmax evidence="1">9.09 umol/min/mg enzyme with L-gulose as substrate</Vmax>
        <text evidence="1">kcat is 13.7 sec(-1) with D-lyxose as substrate. kcat is 12.7 sec(-1) with D-mannose as substrate. kcat is 8.78 sec(-1) with L-gulose as substrate.</text>
    </kinetics>
    <phDependence>
        <text evidence="1">Optimum pH is 7.5.</text>
    </phDependence>
    <temperatureDependence>
        <text evidence="1">Optimum temperature is 50 degrees Celsius.</text>
    </temperatureDependence>
</comment>
<comment type="subunit">
    <text evidence="1">Homodimer; disulfide-linked (PubMed:20615418). Dimerization is facilitated through a disulfide bond between the two monomers of the dimeric enzyme (PubMed:20615418).</text>
</comment>
<comment type="similarity">
    <text evidence="2">Belongs to the D-lyxose ketol-isomerase family.</text>
</comment>
<organism>
    <name type="scientific">Escherichia coli O157:H7</name>
    <dbReference type="NCBI Taxonomy" id="83334"/>
    <lineage>
        <taxon>Bacteria</taxon>
        <taxon>Pseudomonadati</taxon>
        <taxon>Pseudomonadota</taxon>
        <taxon>Gammaproteobacteria</taxon>
        <taxon>Enterobacterales</taxon>
        <taxon>Enterobacteriaceae</taxon>
        <taxon>Escherichia</taxon>
    </lineage>
</organism>
<sequence length="227" mass="25798">MKRSAINDILGHTRQFFSQHDVHLPPFASFSPAQWQQLDTAAWEEVFDLKLGWDVTAFGRNNFAAHGLTLFTLRNGSAKGMPYVKCYAEKIMHVRDAQVTPMHFHWRKREDIINRGGGNLIVELWNADSNEQTADSDITVVIDGCRQKHTAGSQLRLSPGESICLPPGLYHSFWAEAGFGDVLVGEVSSVNDDDHDNHFLQPLDRYNLIDEDEPAQLVLCNEYRQFR</sequence>
<protein>
    <recommendedName>
        <fullName evidence="2">D-lyxose/D-mannose isomerase</fullName>
        <ecNumber evidence="1">5.3.1.15</ecNumber>
        <ecNumber evidence="1">5.3.1.7</ecNumber>
    </recommendedName>
</protein>
<gene>
    <name evidence="3" type="ordered locus">Z5688</name>
</gene>
<keyword id="KW-0002">3D-structure</keyword>
<keyword id="KW-0119">Carbohydrate metabolism</keyword>
<keyword id="KW-1015">Disulfide bond</keyword>
<keyword id="KW-0413">Isomerase</keyword>
<keyword id="KW-0464">Manganese</keyword>
<keyword id="KW-0479">Metal-binding</keyword>
<reference key="1">
    <citation type="journal article" date="2001" name="Nature">
        <title>Genome sequence of enterohaemorrhagic Escherichia coli O157:H7.</title>
        <authorList>
            <person name="Perna N.T."/>
            <person name="Plunkett G. III"/>
            <person name="Burland V."/>
            <person name="Mau B."/>
            <person name="Glasner J.D."/>
            <person name="Rose D.J."/>
            <person name="Mayhew G.F."/>
            <person name="Evans P.S."/>
            <person name="Gregor J."/>
            <person name="Kirkpatrick H.A."/>
            <person name="Posfai G."/>
            <person name="Hackett J."/>
            <person name="Klink S."/>
            <person name="Boutin A."/>
            <person name="Shao Y."/>
            <person name="Miller L."/>
            <person name="Grotbeck E.J."/>
            <person name="Davis N.W."/>
            <person name="Lim A."/>
            <person name="Dimalanta E.T."/>
            <person name="Potamousis K."/>
            <person name="Apodaca J."/>
            <person name="Anantharaman T.S."/>
            <person name="Lin J."/>
            <person name="Yen G."/>
            <person name="Schwartz D.C."/>
            <person name="Welch R.A."/>
            <person name="Blattner F.R."/>
        </authorList>
    </citation>
    <scope>NUCLEOTIDE SEQUENCE [LARGE SCALE GENOMIC DNA]</scope>
    <source>
        <strain>O157:H7 / EDL933 / ATCC 700927 / EHEC</strain>
    </source>
</reference>
<reference evidence="4 5" key="2">
    <citation type="journal article" date="2010" name="J. Mol. Biol.">
        <title>Structure-based annotation of a novel sugar isomerase from the pathogenic E. coli O157:H7.</title>
        <authorList>
            <person name="van Staalduinen L.M."/>
            <person name="Park C.S."/>
            <person name="Yeom S.J."/>
            <person name="Adams-Cioaba M.A."/>
            <person name="Oh D.K."/>
            <person name="Jia Z."/>
        </authorList>
    </citation>
    <scope>X-RAY CRYSTALLOGRAPHY (1.58 ANGSTROMS) IN COMPLEXES WITH FRUCTOSE AND MANGANESE</scope>
    <scope>FUNCTION</scope>
    <scope>CATALYTIC ACTIVITY</scope>
    <scope>COFACTOR</scope>
    <scope>BIOPHYSICOCHEMICAL PROPERTIES</scope>
    <scope>SUBUNIT</scope>
    <scope>DISULFIDE BOND</scope>
    <scope>MUTAGENESIS OF LYS-90; LYS-108; GLU-110; GLU-186; ASP-193 AND ARG-205</scope>
    <source>
        <strain>O157:H7 / EDL933 / ATCC 700927 / EHEC</strain>
    </source>
</reference>
<proteinExistence type="evidence at protein level"/>
<name>DLMIS_ECO57</name>
<accession>A0A6M7H989</accession>
<evidence type="ECO:0000269" key="1">
    <source>
    </source>
</evidence>
<evidence type="ECO:0000305" key="2"/>
<evidence type="ECO:0000312" key="3">
    <source>
        <dbReference type="EMBL" id="AAG59285.1"/>
    </source>
</evidence>
<evidence type="ECO:0007744" key="4">
    <source>
        <dbReference type="PDB" id="3KMH"/>
    </source>
</evidence>
<evidence type="ECO:0007744" key="5">
    <source>
        <dbReference type="PDB" id="3MPB"/>
    </source>
</evidence>